<accession>A4SGN6</accession>
<keyword id="KW-0963">Cytoplasm</keyword>
<keyword id="KW-0210">Decarboxylase</keyword>
<keyword id="KW-0456">Lyase</keyword>
<keyword id="KW-0627">Porphyrin biosynthesis</keyword>
<sequence length="351" mass="38897">MLKNDLFLRALKRQPCSRTPIWVMRQAGRYLPEYRAIREKTDFLTLCKTPELAAEVTIQPVELMGVDAAIIFSDILVVNEAMGMDVEIIETKGIKLSPPIRSQVDIDRLSVPDVHDKLGYVLDAIRLTKKELDNRVPLIGFSGAAWTLFTYAVEGGGSKNYAFAKKMMFRDPKMAHMLLSKISSVISDYVCAQVEAGADAIQIFDSWASALSEDDYREFALPYIKENVQALKTKYPDIPVIVFSKDCNTILEDIAATGCDAVGLGWGIDIAKARTILGDRVCLQGNMDPTVLYGTPEKIKAEAGKILKQFGQHTANSGHVFNLGHGILPDVDPANLKLLVEFVKEESAKYH</sequence>
<organism>
    <name type="scientific">Chlorobium phaeovibrioides (strain DSM 265 / 1930)</name>
    <name type="common">Prosthecochloris vibrioformis (strain DSM 265)</name>
    <dbReference type="NCBI Taxonomy" id="290318"/>
    <lineage>
        <taxon>Bacteria</taxon>
        <taxon>Pseudomonadati</taxon>
        <taxon>Chlorobiota</taxon>
        <taxon>Chlorobiia</taxon>
        <taxon>Chlorobiales</taxon>
        <taxon>Chlorobiaceae</taxon>
        <taxon>Chlorobium/Pelodictyon group</taxon>
        <taxon>Chlorobium</taxon>
    </lineage>
</organism>
<comment type="function">
    <text evidence="1">Catalyzes the decarboxylation of four acetate groups of uroporphyrinogen-III to yield coproporphyrinogen-III.</text>
</comment>
<comment type="catalytic activity">
    <reaction evidence="1">
        <text>uroporphyrinogen III + 4 H(+) = coproporphyrinogen III + 4 CO2</text>
        <dbReference type="Rhea" id="RHEA:19865"/>
        <dbReference type="ChEBI" id="CHEBI:15378"/>
        <dbReference type="ChEBI" id="CHEBI:16526"/>
        <dbReference type="ChEBI" id="CHEBI:57308"/>
        <dbReference type="ChEBI" id="CHEBI:57309"/>
        <dbReference type="EC" id="4.1.1.37"/>
    </reaction>
</comment>
<comment type="pathway">
    <text evidence="1">Porphyrin-containing compound metabolism; protoporphyrin-IX biosynthesis; coproporphyrinogen-III from 5-aminolevulinate: step 4/4.</text>
</comment>
<comment type="subunit">
    <text evidence="1">Homodimer.</text>
</comment>
<comment type="subcellular location">
    <subcellularLocation>
        <location evidence="1">Cytoplasm</location>
    </subcellularLocation>
</comment>
<comment type="similarity">
    <text evidence="1">Belongs to the uroporphyrinogen decarboxylase family.</text>
</comment>
<evidence type="ECO:0000255" key="1">
    <source>
        <dbReference type="HAMAP-Rule" id="MF_00218"/>
    </source>
</evidence>
<name>DCUP_CHLPM</name>
<feature type="chain" id="PRO_1000078080" description="Uroporphyrinogen decarboxylase">
    <location>
        <begin position="1"/>
        <end position="351"/>
    </location>
</feature>
<feature type="binding site" evidence="1">
    <location>
        <begin position="25"/>
        <end position="29"/>
    </location>
    <ligand>
        <name>substrate</name>
    </ligand>
</feature>
<feature type="binding site" evidence="1">
    <location>
        <position position="74"/>
    </location>
    <ligand>
        <name>substrate</name>
    </ligand>
</feature>
<feature type="binding site" evidence="1">
    <location>
        <position position="151"/>
    </location>
    <ligand>
        <name>substrate</name>
    </ligand>
</feature>
<feature type="binding site" evidence="1">
    <location>
        <position position="206"/>
    </location>
    <ligand>
        <name>substrate</name>
    </ligand>
</feature>
<feature type="binding site" evidence="1">
    <location>
        <position position="325"/>
    </location>
    <ligand>
        <name>substrate</name>
    </ligand>
</feature>
<feature type="site" description="Transition state stabilizer" evidence="1">
    <location>
        <position position="74"/>
    </location>
</feature>
<gene>
    <name evidence="1" type="primary">hemE</name>
    <name type="ordered locus">Cvib_1635</name>
</gene>
<reference key="1">
    <citation type="submission" date="2007-03" db="EMBL/GenBank/DDBJ databases">
        <title>Complete sequence of Prosthecochloris vibrioformis DSM 265.</title>
        <authorList>
            <consortium name="US DOE Joint Genome Institute"/>
            <person name="Copeland A."/>
            <person name="Lucas S."/>
            <person name="Lapidus A."/>
            <person name="Barry K."/>
            <person name="Detter J.C."/>
            <person name="Glavina del Rio T."/>
            <person name="Hammon N."/>
            <person name="Israni S."/>
            <person name="Pitluck S."/>
            <person name="Schmutz J."/>
            <person name="Larimer F."/>
            <person name="Land M."/>
            <person name="Hauser L."/>
            <person name="Mikhailova N."/>
            <person name="Li T."/>
            <person name="Overmann J."/>
            <person name="Schuster S.C."/>
            <person name="Bryant D.A."/>
            <person name="Richardson P."/>
        </authorList>
    </citation>
    <scope>NUCLEOTIDE SEQUENCE [LARGE SCALE GENOMIC DNA]</scope>
    <source>
        <strain>DSM 265 / 1930</strain>
    </source>
</reference>
<dbReference type="EC" id="4.1.1.37" evidence="1"/>
<dbReference type="EMBL" id="CP000607">
    <property type="protein sequence ID" value="ABP37645.1"/>
    <property type="molecule type" value="Genomic_DNA"/>
</dbReference>
<dbReference type="SMR" id="A4SGN6"/>
<dbReference type="STRING" id="290318.Cvib_1635"/>
<dbReference type="KEGG" id="pvi:Cvib_1635"/>
<dbReference type="eggNOG" id="COG0407">
    <property type="taxonomic scope" value="Bacteria"/>
</dbReference>
<dbReference type="HOGENOM" id="CLU_040933_0_0_10"/>
<dbReference type="OrthoDB" id="9806656at2"/>
<dbReference type="UniPathway" id="UPA00251">
    <property type="reaction ID" value="UER00321"/>
</dbReference>
<dbReference type="GO" id="GO:0005829">
    <property type="term" value="C:cytosol"/>
    <property type="evidence" value="ECO:0007669"/>
    <property type="project" value="TreeGrafter"/>
</dbReference>
<dbReference type="GO" id="GO:0004853">
    <property type="term" value="F:uroporphyrinogen decarboxylase activity"/>
    <property type="evidence" value="ECO:0007669"/>
    <property type="project" value="UniProtKB-UniRule"/>
</dbReference>
<dbReference type="GO" id="GO:0006782">
    <property type="term" value="P:protoporphyrinogen IX biosynthetic process"/>
    <property type="evidence" value="ECO:0007669"/>
    <property type="project" value="UniProtKB-UniRule"/>
</dbReference>
<dbReference type="CDD" id="cd00717">
    <property type="entry name" value="URO-D"/>
    <property type="match status" value="1"/>
</dbReference>
<dbReference type="FunFam" id="3.20.20.210:FF:000001">
    <property type="entry name" value="Uroporphyrinogen decarboxylase"/>
    <property type="match status" value="1"/>
</dbReference>
<dbReference type="Gene3D" id="3.20.20.210">
    <property type="match status" value="1"/>
</dbReference>
<dbReference type="HAMAP" id="MF_00218">
    <property type="entry name" value="URO_D"/>
    <property type="match status" value="1"/>
</dbReference>
<dbReference type="InterPro" id="IPR038071">
    <property type="entry name" value="UROD/MetE-like_sf"/>
</dbReference>
<dbReference type="InterPro" id="IPR006361">
    <property type="entry name" value="Uroporphyrinogen_deCO2ase_HemE"/>
</dbReference>
<dbReference type="InterPro" id="IPR000257">
    <property type="entry name" value="Uroporphyrinogen_deCOase"/>
</dbReference>
<dbReference type="NCBIfam" id="TIGR01464">
    <property type="entry name" value="hemE"/>
    <property type="match status" value="1"/>
</dbReference>
<dbReference type="PANTHER" id="PTHR21091">
    <property type="entry name" value="METHYLTETRAHYDROFOLATE:HOMOCYSTEINE METHYLTRANSFERASE RELATED"/>
    <property type="match status" value="1"/>
</dbReference>
<dbReference type="PANTHER" id="PTHR21091:SF169">
    <property type="entry name" value="UROPORPHYRINOGEN DECARBOXYLASE"/>
    <property type="match status" value="1"/>
</dbReference>
<dbReference type="Pfam" id="PF01208">
    <property type="entry name" value="URO-D"/>
    <property type="match status" value="1"/>
</dbReference>
<dbReference type="SUPFAM" id="SSF51726">
    <property type="entry name" value="UROD/MetE-like"/>
    <property type="match status" value="1"/>
</dbReference>
<dbReference type="PROSITE" id="PS00906">
    <property type="entry name" value="UROD_1"/>
    <property type="match status" value="1"/>
</dbReference>
<dbReference type="PROSITE" id="PS00907">
    <property type="entry name" value="UROD_2"/>
    <property type="match status" value="1"/>
</dbReference>
<protein>
    <recommendedName>
        <fullName evidence="1">Uroporphyrinogen decarboxylase</fullName>
        <shortName evidence="1">UPD</shortName>
        <shortName evidence="1">URO-D</shortName>
        <ecNumber evidence="1">4.1.1.37</ecNumber>
    </recommendedName>
</protein>
<proteinExistence type="inferred from homology"/>